<organism>
    <name type="scientific">Pseudomonas aeruginosa (strain ATCC 15692 / DSM 22644 / CIP 104116 / JCM 14847 / LMG 12228 / 1C / PRS 101 / PAO1)</name>
    <dbReference type="NCBI Taxonomy" id="208964"/>
    <lineage>
        <taxon>Bacteria</taxon>
        <taxon>Pseudomonadati</taxon>
        <taxon>Pseudomonadota</taxon>
        <taxon>Gammaproteobacteria</taxon>
        <taxon>Pseudomonadales</taxon>
        <taxon>Pseudomonadaceae</taxon>
        <taxon>Pseudomonas</taxon>
    </lineage>
</organism>
<accession>P33641</accession>
<accession>Q9HVN3</accession>
<dbReference type="EMBL" id="Z12154">
    <property type="protein sequence ID" value="CAA78141.1"/>
    <property type="molecule type" value="Genomic_DNA"/>
</dbReference>
<dbReference type="EMBL" id="AE004091">
    <property type="protein sequence ID" value="AAG07933.1"/>
    <property type="molecule type" value="Genomic_DNA"/>
</dbReference>
<dbReference type="PIR" id="G83077">
    <property type="entry name" value="G83077"/>
</dbReference>
<dbReference type="PIR" id="S33676">
    <property type="entry name" value="S26603"/>
</dbReference>
<dbReference type="RefSeq" id="WP_003102590.1">
    <property type="nucleotide sequence ID" value="NZ_QZGE01000004.1"/>
</dbReference>
<dbReference type="SMR" id="P33641"/>
<dbReference type="FunCoup" id="P33641">
    <property type="interactions" value="121"/>
</dbReference>
<dbReference type="STRING" id="208964.PA4545"/>
<dbReference type="PaxDb" id="208964-PA4545"/>
<dbReference type="DNASU" id="877897"/>
<dbReference type="KEGG" id="pae:PA4545"/>
<dbReference type="PATRIC" id="fig|208964.12.peg.4756"/>
<dbReference type="PseudoCAP" id="PA4545"/>
<dbReference type="HOGENOM" id="CLU_065982_0_0_6"/>
<dbReference type="InParanoid" id="P33641"/>
<dbReference type="OrthoDB" id="9779191at2"/>
<dbReference type="PhylomeDB" id="P33641"/>
<dbReference type="BioCyc" id="PAER208964:G1FZ6-4638-MONOMER"/>
<dbReference type="Proteomes" id="UP000002438">
    <property type="component" value="Chromosome"/>
</dbReference>
<dbReference type="GO" id="GO:1990063">
    <property type="term" value="C:Bam protein complex"/>
    <property type="evidence" value="ECO:0000318"/>
    <property type="project" value="GO_Central"/>
</dbReference>
<dbReference type="GO" id="GO:0043165">
    <property type="term" value="P:Gram-negative-bacterium-type cell outer membrane assembly"/>
    <property type="evidence" value="ECO:0007669"/>
    <property type="project" value="UniProtKB-UniRule"/>
</dbReference>
<dbReference type="GO" id="GO:0051205">
    <property type="term" value="P:protein insertion into membrane"/>
    <property type="evidence" value="ECO:0000318"/>
    <property type="project" value="GO_Central"/>
</dbReference>
<dbReference type="CDD" id="cd15830">
    <property type="entry name" value="BamD"/>
    <property type="match status" value="1"/>
</dbReference>
<dbReference type="FunFam" id="1.25.40.10:FF:000419">
    <property type="entry name" value="Outer membrane protein assembly factor BamD"/>
    <property type="match status" value="1"/>
</dbReference>
<dbReference type="Gene3D" id="1.25.40.10">
    <property type="entry name" value="Tetratricopeptide repeat domain"/>
    <property type="match status" value="1"/>
</dbReference>
<dbReference type="HAMAP" id="MF_00922">
    <property type="entry name" value="OM_assembly_BamD"/>
    <property type="match status" value="1"/>
</dbReference>
<dbReference type="InterPro" id="IPR017689">
    <property type="entry name" value="BamD"/>
</dbReference>
<dbReference type="InterPro" id="IPR039565">
    <property type="entry name" value="BamD-like"/>
</dbReference>
<dbReference type="InterPro" id="IPR011990">
    <property type="entry name" value="TPR-like_helical_dom_sf"/>
</dbReference>
<dbReference type="NCBIfam" id="TIGR03302">
    <property type="entry name" value="OM_YfiO"/>
    <property type="match status" value="1"/>
</dbReference>
<dbReference type="PANTHER" id="PTHR37423:SF1">
    <property type="entry name" value="OUTER MEMBRANE PROTEIN ASSEMBLY FACTOR BAMD"/>
    <property type="match status" value="1"/>
</dbReference>
<dbReference type="PANTHER" id="PTHR37423">
    <property type="entry name" value="SOLUBLE LYTIC MUREIN TRANSGLYCOSYLASE-RELATED"/>
    <property type="match status" value="1"/>
</dbReference>
<dbReference type="Pfam" id="PF13525">
    <property type="entry name" value="YfiO"/>
    <property type="match status" value="1"/>
</dbReference>
<dbReference type="PROSITE" id="PS51257">
    <property type="entry name" value="PROKAR_LIPOPROTEIN"/>
    <property type="match status" value="1"/>
</dbReference>
<comment type="function">
    <text evidence="1">Part of the outer membrane protein assembly complex, which is involved in assembly and insertion of beta-barrel proteins into the outer membrane.</text>
</comment>
<comment type="subunit">
    <text evidence="1">Part of the Bam complex.</text>
</comment>
<comment type="subcellular location">
    <subcellularLocation>
        <location evidence="1">Cell outer membrane</location>
        <topology evidence="1">Lipid-anchor</topology>
    </subcellularLocation>
</comment>
<comment type="similarity">
    <text evidence="1">Belongs to the BamD family.</text>
</comment>
<feature type="signal peptide" evidence="1">
    <location>
        <begin position="1"/>
        <end position="17"/>
    </location>
</feature>
<feature type="chain" id="PRO_0000036230" description="Outer membrane protein assembly factor BamD">
    <location>
        <begin position="18"/>
        <end position="341"/>
    </location>
</feature>
<feature type="region of interest" description="Disordered" evidence="2">
    <location>
        <begin position="289"/>
        <end position="330"/>
    </location>
</feature>
<feature type="compositionally biased region" description="Basic and acidic residues" evidence="2">
    <location>
        <begin position="289"/>
        <end position="316"/>
    </location>
</feature>
<feature type="compositionally biased region" description="Acidic residues" evidence="2">
    <location>
        <begin position="317"/>
        <end position="326"/>
    </location>
</feature>
<feature type="lipid moiety-binding region" description="N-palmitoyl cysteine" evidence="1">
    <location>
        <position position="18"/>
    </location>
</feature>
<feature type="lipid moiety-binding region" description="S-diacylglycerol cysteine" evidence="1">
    <location>
        <position position="18"/>
    </location>
</feature>
<feature type="sequence conflict" description="In Ref. 1; CAA78141." evidence="3" ref="1">
    <original>F</original>
    <variation>L</variation>
    <location>
        <position position="153"/>
    </location>
</feature>
<feature type="sequence conflict" description="In Ref. 1; CAA78141." evidence="3" ref="1">
    <original>R</original>
    <variation>H</variation>
    <location>
        <position position="262"/>
    </location>
</feature>
<keyword id="KW-0998">Cell outer membrane</keyword>
<keyword id="KW-0449">Lipoprotein</keyword>
<keyword id="KW-0472">Membrane</keyword>
<keyword id="KW-0564">Palmitate</keyword>
<keyword id="KW-1185">Reference proteome</keyword>
<keyword id="KW-0732">Signal</keyword>
<proteinExistence type="inferred from homology"/>
<protein>
    <recommendedName>
        <fullName evidence="1">Outer membrane protein assembly factor BamD</fullName>
    </recommendedName>
</protein>
<reference key="1">
    <citation type="journal article" date="1993" name="Mol. Microbiol.">
        <title>PilS and PilR, a two-component transcriptional regulatory system controlling expression of type 4 fimbriae in Pseudomonas aeruginosa.</title>
        <authorList>
            <person name="Hobbs M."/>
            <person name="Collie E.S.R."/>
            <person name="Free P.D."/>
            <person name="Livingston S.P."/>
            <person name="Mattick J.S."/>
        </authorList>
    </citation>
    <scope>NUCLEOTIDE SEQUENCE [GENOMIC DNA]</scope>
    <source>
        <strain>ATCC 15692 / DSM 22644 / CIP 104116 / JCM 14847 / LMG 12228 / 1C / PRS 101 / PAO1</strain>
    </source>
</reference>
<reference key="2">
    <citation type="journal article" date="2000" name="Nature">
        <title>Complete genome sequence of Pseudomonas aeruginosa PAO1, an opportunistic pathogen.</title>
        <authorList>
            <person name="Stover C.K."/>
            <person name="Pham X.-Q.T."/>
            <person name="Erwin A.L."/>
            <person name="Mizoguchi S.D."/>
            <person name="Warrener P."/>
            <person name="Hickey M.J."/>
            <person name="Brinkman F.S.L."/>
            <person name="Hufnagle W.O."/>
            <person name="Kowalik D.J."/>
            <person name="Lagrou M."/>
            <person name="Garber R.L."/>
            <person name="Goltry L."/>
            <person name="Tolentino E."/>
            <person name="Westbrock-Wadman S."/>
            <person name="Yuan Y."/>
            <person name="Brody L.L."/>
            <person name="Coulter S.N."/>
            <person name="Folger K.R."/>
            <person name="Kas A."/>
            <person name="Larbig K."/>
            <person name="Lim R.M."/>
            <person name="Smith K.A."/>
            <person name="Spencer D.H."/>
            <person name="Wong G.K.-S."/>
            <person name="Wu Z."/>
            <person name="Paulsen I.T."/>
            <person name="Reizer J."/>
            <person name="Saier M.H. Jr."/>
            <person name="Hancock R.E.W."/>
            <person name="Lory S."/>
            <person name="Olson M.V."/>
        </authorList>
    </citation>
    <scope>NUCLEOTIDE SEQUENCE [LARGE SCALE GENOMIC DNA]</scope>
    <source>
        <strain>ATCC 15692 / DSM 22644 / CIP 104116 / JCM 14847 / LMG 12228 / 1C / PRS 101 / PAO1</strain>
    </source>
</reference>
<sequence>MQVKHLLLIAILALTAACSSNKETVDENLSESQLYQQAQDDLNNKSYNSAVTKLKALESRYPFGRYAEQAQLELIYANYKNMEPEAARAAAERFIRLHPQHPNVDYAYYLKGLSSFDQDRGLLARFLPLDMTKRDPGAARDSFNEFAQLTSRFPNSRYAPDAKARMVYLRNLLAAYEVHVGHYYLKRQAYVAAANRGRYVVENFQETPAVGDGLAIMVEAYRRLGLDDLASTSLETLKLNYPDNASLKDGEFVARESEADTRSWLAKATLGLIEGGEPPPHMETQAAKDVIKQYEDAEREIPAELKPENQDHSADDEKPESDDDEDSGRSWWSYMTFGLFD</sequence>
<name>BAMD_PSEAE</name>
<gene>
    <name evidence="1" type="primary">bamD</name>
    <name type="ordered locus">PA4545</name>
</gene>
<evidence type="ECO:0000255" key="1">
    <source>
        <dbReference type="HAMAP-Rule" id="MF_00922"/>
    </source>
</evidence>
<evidence type="ECO:0000256" key="2">
    <source>
        <dbReference type="SAM" id="MobiDB-lite"/>
    </source>
</evidence>
<evidence type="ECO:0000305" key="3"/>